<feature type="chain" id="PRO_1000061555" description="Putative pre-16S rRNA nuclease">
    <location>
        <begin position="1"/>
        <end position="144"/>
    </location>
</feature>
<dbReference type="EC" id="3.1.-.-" evidence="1"/>
<dbReference type="EMBL" id="CP000744">
    <property type="protein sequence ID" value="ABR85203.1"/>
    <property type="molecule type" value="Genomic_DNA"/>
</dbReference>
<dbReference type="RefSeq" id="WP_003157748.1">
    <property type="nucleotide sequence ID" value="NC_009656.1"/>
</dbReference>
<dbReference type="SMR" id="A6UYL4"/>
<dbReference type="KEGG" id="pap:PSPA7_0504"/>
<dbReference type="HOGENOM" id="CLU_098240_3_0_6"/>
<dbReference type="Proteomes" id="UP000001582">
    <property type="component" value="Chromosome"/>
</dbReference>
<dbReference type="GO" id="GO:0005829">
    <property type="term" value="C:cytosol"/>
    <property type="evidence" value="ECO:0007669"/>
    <property type="project" value="TreeGrafter"/>
</dbReference>
<dbReference type="GO" id="GO:0004518">
    <property type="term" value="F:nuclease activity"/>
    <property type="evidence" value="ECO:0007669"/>
    <property type="project" value="UniProtKB-KW"/>
</dbReference>
<dbReference type="GO" id="GO:0000967">
    <property type="term" value="P:rRNA 5'-end processing"/>
    <property type="evidence" value="ECO:0007669"/>
    <property type="project" value="UniProtKB-UniRule"/>
</dbReference>
<dbReference type="CDD" id="cd16964">
    <property type="entry name" value="YqgF"/>
    <property type="match status" value="1"/>
</dbReference>
<dbReference type="FunFam" id="3.30.420.140:FF:000002">
    <property type="entry name" value="Putative pre-16S rRNA nuclease"/>
    <property type="match status" value="1"/>
</dbReference>
<dbReference type="Gene3D" id="3.30.420.140">
    <property type="entry name" value="YqgF/RNase H-like domain"/>
    <property type="match status" value="1"/>
</dbReference>
<dbReference type="HAMAP" id="MF_00651">
    <property type="entry name" value="Nuclease_YqgF"/>
    <property type="match status" value="1"/>
</dbReference>
<dbReference type="InterPro" id="IPR012337">
    <property type="entry name" value="RNaseH-like_sf"/>
</dbReference>
<dbReference type="InterPro" id="IPR005227">
    <property type="entry name" value="YqgF"/>
</dbReference>
<dbReference type="InterPro" id="IPR006641">
    <property type="entry name" value="YqgF/RNaseH-like_dom"/>
</dbReference>
<dbReference type="InterPro" id="IPR037027">
    <property type="entry name" value="YqgF/RNaseH-like_dom_sf"/>
</dbReference>
<dbReference type="NCBIfam" id="TIGR00250">
    <property type="entry name" value="RNAse_H_YqgF"/>
    <property type="match status" value="1"/>
</dbReference>
<dbReference type="PANTHER" id="PTHR33317">
    <property type="entry name" value="POLYNUCLEOTIDYL TRANSFERASE, RIBONUCLEASE H-LIKE SUPERFAMILY PROTEIN"/>
    <property type="match status" value="1"/>
</dbReference>
<dbReference type="PANTHER" id="PTHR33317:SF4">
    <property type="entry name" value="POLYNUCLEOTIDYL TRANSFERASE, RIBONUCLEASE H-LIKE SUPERFAMILY PROTEIN"/>
    <property type="match status" value="1"/>
</dbReference>
<dbReference type="Pfam" id="PF03652">
    <property type="entry name" value="RuvX"/>
    <property type="match status" value="1"/>
</dbReference>
<dbReference type="SMART" id="SM00732">
    <property type="entry name" value="YqgFc"/>
    <property type="match status" value="1"/>
</dbReference>
<dbReference type="SUPFAM" id="SSF53098">
    <property type="entry name" value="Ribonuclease H-like"/>
    <property type="match status" value="1"/>
</dbReference>
<keyword id="KW-0963">Cytoplasm</keyword>
<keyword id="KW-0378">Hydrolase</keyword>
<keyword id="KW-0540">Nuclease</keyword>
<keyword id="KW-0690">Ribosome biogenesis</keyword>
<evidence type="ECO:0000255" key="1">
    <source>
        <dbReference type="HAMAP-Rule" id="MF_00651"/>
    </source>
</evidence>
<name>YQGF_PSEP7</name>
<proteinExistence type="inferred from homology"/>
<comment type="function">
    <text evidence="1">Could be a nuclease involved in processing of the 5'-end of pre-16S rRNA.</text>
</comment>
<comment type="subcellular location">
    <subcellularLocation>
        <location evidence="1">Cytoplasm</location>
    </subcellularLocation>
</comment>
<comment type="similarity">
    <text evidence="1">Belongs to the YqgF nuclease family.</text>
</comment>
<sequence>MAADKPLRLLLGFDYGTRQIGVAVGQAVTGQARELCVLKAQNGVPDWNRVEALIKEWQPDAIVVGLPLNMDGSPSEMSERAEKFGRRLNGRFNLPVFTHDERLTTYAAKGERLAQGQRDGYRERPVDALAAALLLEGWLAEHPN</sequence>
<reference key="1">
    <citation type="submission" date="2007-06" db="EMBL/GenBank/DDBJ databases">
        <authorList>
            <person name="Dodson R.J."/>
            <person name="Harkins D."/>
            <person name="Paulsen I.T."/>
        </authorList>
    </citation>
    <scope>NUCLEOTIDE SEQUENCE [LARGE SCALE GENOMIC DNA]</scope>
    <source>
        <strain>DSM 24068 / PA7</strain>
    </source>
</reference>
<protein>
    <recommendedName>
        <fullName evidence="1">Putative pre-16S rRNA nuclease</fullName>
        <ecNumber evidence="1">3.1.-.-</ecNumber>
    </recommendedName>
</protein>
<gene>
    <name type="ordered locus">PSPA7_0504</name>
</gene>
<organism>
    <name type="scientific">Pseudomonas paraeruginosa (strain DSM 24068 / PA7)</name>
    <name type="common">Pseudomonas aeruginosa (strain PA7)</name>
    <dbReference type="NCBI Taxonomy" id="381754"/>
    <lineage>
        <taxon>Bacteria</taxon>
        <taxon>Pseudomonadati</taxon>
        <taxon>Pseudomonadota</taxon>
        <taxon>Gammaproteobacteria</taxon>
        <taxon>Pseudomonadales</taxon>
        <taxon>Pseudomonadaceae</taxon>
        <taxon>Pseudomonas</taxon>
        <taxon>Pseudomonas paraeruginosa</taxon>
    </lineage>
</organism>
<accession>A6UYL4</accession>